<name>ACCA_PROMS</name>
<accession>A2BQ15</accession>
<protein>
    <recommendedName>
        <fullName evidence="1">Acetyl-coenzyme A carboxylase carboxyl transferase subunit alpha</fullName>
        <shortName evidence="1">ACCase subunit alpha</shortName>
        <shortName evidence="1">Acetyl-CoA carboxylase carboxyltransferase subunit alpha</shortName>
        <ecNumber evidence="1">2.1.3.15</ecNumber>
    </recommendedName>
</protein>
<feature type="chain" id="PRO_1000062653" description="Acetyl-coenzyme A carboxylase carboxyl transferase subunit alpha">
    <location>
        <begin position="1"/>
        <end position="335"/>
    </location>
</feature>
<feature type="domain" description="CoA carboxyltransferase C-terminal" evidence="2">
    <location>
        <begin position="40"/>
        <end position="294"/>
    </location>
</feature>
<reference key="1">
    <citation type="journal article" date="2007" name="PLoS Genet.">
        <title>Patterns and implications of gene gain and loss in the evolution of Prochlorococcus.</title>
        <authorList>
            <person name="Kettler G.C."/>
            <person name="Martiny A.C."/>
            <person name="Huang K."/>
            <person name="Zucker J."/>
            <person name="Coleman M.L."/>
            <person name="Rodrigue S."/>
            <person name="Chen F."/>
            <person name="Lapidus A."/>
            <person name="Ferriera S."/>
            <person name="Johnson J."/>
            <person name="Steglich C."/>
            <person name="Church G.M."/>
            <person name="Richardson P."/>
            <person name="Chisholm S.W."/>
        </authorList>
    </citation>
    <scope>NUCLEOTIDE SEQUENCE [LARGE SCALE GENOMIC DNA]</scope>
    <source>
        <strain>AS9601</strain>
    </source>
</reference>
<proteinExistence type="inferred from homology"/>
<dbReference type="EC" id="2.1.3.15" evidence="1"/>
<dbReference type="EMBL" id="CP000551">
    <property type="protein sequence ID" value="ABM69876.1"/>
    <property type="molecule type" value="Genomic_DNA"/>
</dbReference>
<dbReference type="RefSeq" id="WP_011818042.1">
    <property type="nucleotide sequence ID" value="NC_008816.1"/>
</dbReference>
<dbReference type="SMR" id="A2BQ15"/>
<dbReference type="STRING" id="146891.A9601_05901"/>
<dbReference type="KEGG" id="pmb:A9601_05901"/>
<dbReference type="eggNOG" id="COG0825">
    <property type="taxonomic scope" value="Bacteria"/>
</dbReference>
<dbReference type="HOGENOM" id="CLU_015486_0_2_3"/>
<dbReference type="OrthoDB" id="9808023at2"/>
<dbReference type="UniPathway" id="UPA00655">
    <property type="reaction ID" value="UER00711"/>
</dbReference>
<dbReference type="Proteomes" id="UP000002590">
    <property type="component" value="Chromosome"/>
</dbReference>
<dbReference type="GO" id="GO:0009317">
    <property type="term" value="C:acetyl-CoA carboxylase complex"/>
    <property type="evidence" value="ECO:0007669"/>
    <property type="project" value="InterPro"/>
</dbReference>
<dbReference type="GO" id="GO:0003989">
    <property type="term" value="F:acetyl-CoA carboxylase activity"/>
    <property type="evidence" value="ECO:0007669"/>
    <property type="project" value="InterPro"/>
</dbReference>
<dbReference type="GO" id="GO:0005524">
    <property type="term" value="F:ATP binding"/>
    <property type="evidence" value="ECO:0007669"/>
    <property type="project" value="UniProtKB-KW"/>
</dbReference>
<dbReference type="GO" id="GO:0016743">
    <property type="term" value="F:carboxyl- or carbamoyltransferase activity"/>
    <property type="evidence" value="ECO:0007669"/>
    <property type="project" value="UniProtKB-UniRule"/>
</dbReference>
<dbReference type="GO" id="GO:0006633">
    <property type="term" value="P:fatty acid biosynthetic process"/>
    <property type="evidence" value="ECO:0007669"/>
    <property type="project" value="UniProtKB-KW"/>
</dbReference>
<dbReference type="GO" id="GO:2001295">
    <property type="term" value="P:malonyl-CoA biosynthetic process"/>
    <property type="evidence" value="ECO:0007669"/>
    <property type="project" value="UniProtKB-UniRule"/>
</dbReference>
<dbReference type="Gene3D" id="3.90.226.10">
    <property type="entry name" value="2-enoyl-CoA Hydratase, Chain A, domain 1"/>
    <property type="match status" value="1"/>
</dbReference>
<dbReference type="HAMAP" id="MF_00823">
    <property type="entry name" value="AcetylCoA_CT_alpha"/>
    <property type="match status" value="1"/>
</dbReference>
<dbReference type="InterPro" id="IPR001095">
    <property type="entry name" value="Acetyl_CoA_COase_a_su"/>
</dbReference>
<dbReference type="InterPro" id="IPR029045">
    <property type="entry name" value="ClpP/crotonase-like_dom_sf"/>
</dbReference>
<dbReference type="InterPro" id="IPR011763">
    <property type="entry name" value="COA_CT_C"/>
</dbReference>
<dbReference type="NCBIfam" id="TIGR00513">
    <property type="entry name" value="accA"/>
    <property type="match status" value="1"/>
</dbReference>
<dbReference type="NCBIfam" id="NF041504">
    <property type="entry name" value="AccA_sub"/>
    <property type="match status" value="1"/>
</dbReference>
<dbReference type="NCBIfam" id="NF004344">
    <property type="entry name" value="PRK05724.1"/>
    <property type="match status" value="1"/>
</dbReference>
<dbReference type="PANTHER" id="PTHR42853">
    <property type="entry name" value="ACETYL-COENZYME A CARBOXYLASE CARBOXYL TRANSFERASE SUBUNIT ALPHA"/>
    <property type="match status" value="1"/>
</dbReference>
<dbReference type="PANTHER" id="PTHR42853:SF3">
    <property type="entry name" value="ACETYL-COENZYME A CARBOXYLASE CARBOXYL TRANSFERASE SUBUNIT ALPHA, CHLOROPLASTIC"/>
    <property type="match status" value="1"/>
</dbReference>
<dbReference type="Pfam" id="PF03255">
    <property type="entry name" value="ACCA"/>
    <property type="match status" value="1"/>
</dbReference>
<dbReference type="PRINTS" id="PR01069">
    <property type="entry name" value="ACCCTRFRASEA"/>
</dbReference>
<dbReference type="SUPFAM" id="SSF52096">
    <property type="entry name" value="ClpP/crotonase"/>
    <property type="match status" value="1"/>
</dbReference>
<dbReference type="PROSITE" id="PS50989">
    <property type="entry name" value="COA_CT_CTER"/>
    <property type="match status" value="1"/>
</dbReference>
<sequence>MAKRYLLDFEKPLVELEKQIEQIKELARDSEVDVSQQLLQLETLAARRREEIFKSLTPAQKIQVARHPQRPSTLDFVQMFCDDWIELHGDRNGGDDMALIGGIGSINNRPVLMLGHQKGRDTKENVVRNFGMAKPGGYRKALRLMQHANRFALPILTFIDTPGAYAGLKAEEQGQGEAIARNLREMFGLKVPIVATVIGEGGSGGALGIGVADRLLMFEHSVYTVASPEACASILWRDAAKAPEAASALKITGNDLLKLGIIDEVLPEPSGGNNWAPLDAGNTLKEAIEKHLNALLQMPEDQLIEERYKKFRILGKFIEANNIEEIYSEIPQKTE</sequence>
<comment type="function">
    <text evidence="1">Component of the acetyl coenzyme A carboxylase (ACC) complex. First, biotin carboxylase catalyzes the carboxylation of biotin on its carrier protein (BCCP) and then the CO(2) group is transferred by the carboxyltransferase to acetyl-CoA to form malonyl-CoA.</text>
</comment>
<comment type="catalytic activity">
    <reaction evidence="1">
        <text>N(6)-carboxybiotinyl-L-lysyl-[protein] + acetyl-CoA = N(6)-biotinyl-L-lysyl-[protein] + malonyl-CoA</text>
        <dbReference type="Rhea" id="RHEA:54728"/>
        <dbReference type="Rhea" id="RHEA-COMP:10505"/>
        <dbReference type="Rhea" id="RHEA-COMP:10506"/>
        <dbReference type="ChEBI" id="CHEBI:57288"/>
        <dbReference type="ChEBI" id="CHEBI:57384"/>
        <dbReference type="ChEBI" id="CHEBI:83144"/>
        <dbReference type="ChEBI" id="CHEBI:83145"/>
        <dbReference type="EC" id="2.1.3.15"/>
    </reaction>
</comment>
<comment type="pathway">
    <text evidence="1">Lipid metabolism; malonyl-CoA biosynthesis; malonyl-CoA from acetyl-CoA: step 1/1.</text>
</comment>
<comment type="subunit">
    <text evidence="1">Acetyl-CoA carboxylase is a heterohexamer composed of biotin carboxyl carrier protein (AccB), biotin carboxylase (AccC) and two subunits each of ACCase subunit alpha (AccA) and ACCase subunit beta (AccD).</text>
</comment>
<comment type="subcellular location">
    <subcellularLocation>
        <location evidence="1">Cytoplasm</location>
    </subcellularLocation>
</comment>
<comment type="similarity">
    <text evidence="1">Belongs to the AccA family.</text>
</comment>
<evidence type="ECO:0000255" key="1">
    <source>
        <dbReference type="HAMAP-Rule" id="MF_00823"/>
    </source>
</evidence>
<evidence type="ECO:0000255" key="2">
    <source>
        <dbReference type="PROSITE-ProRule" id="PRU01137"/>
    </source>
</evidence>
<organism>
    <name type="scientific">Prochlorococcus marinus (strain AS9601)</name>
    <dbReference type="NCBI Taxonomy" id="146891"/>
    <lineage>
        <taxon>Bacteria</taxon>
        <taxon>Bacillati</taxon>
        <taxon>Cyanobacteriota</taxon>
        <taxon>Cyanophyceae</taxon>
        <taxon>Synechococcales</taxon>
        <taxon>Prochlorococcaceae</taxon>
        <taxon>Prochlorococcus</taxon>
    </lineage>
</organism>
<gene>
    <name evidence="1" type="primary">accA</name>
    <name type="ordered locus">A9601_05901</name>
</gene>
<keyword id="KW-0067">ATP-binding</keyword>
<keyword id="KW-0963">Cytoplasm</keyword>
<keyword id="KW-0275">Fatty acid biosynthesis</keyword>
<keyword id="KW-0276">Fatty acid metabolism</keyword>
<keyword id="KW-0444">Lipid biosynthesis</keyword>
<keyword id="KW-0443">Lipid metabolism</keyword>
<keyword id="KW-0547">Nucleotide-binding</keyword>
<keyword id="KW-0808">Transferase</keyword>